<comment type="function">
    <text evidence="3 4 8">Ferric-siderophore reductase involved in iron removal from the siderophores after their transport into the cell (Probable). Acts as a major ferric-vulnibactin reductase catalyzing the reduction of Fe(3+)-vulnibactin, a catecholate siderophore synthesized by V.vulnificus. Catalyzes reduction of Fe(3+)-aerobactin, a citrate-hydroxamate siderophore produced by other bacteria, in the absence of IutB (PubMed:28150143, PubMed:32681432). Catalyzes reduction of Fe(3+)-vibriobactin in vitro. No activity with ferrioxamine B or Fe(3+)-enterobactin. Catalyzes reduction of ferric chelating compounds Fe(3+)-nitrilotriacetic acid (NTA), Fe(3+)-citrate and Fe(3+)-EDTA as well as non-complexed FeCl3 in the presence of NADH as its electron donor and FAD as its cofactor in vitro. Highest activity with Fe(3+)-NTA as electron acceptor (PubMed:32681432).</text>
</comment>
<comment type="catalytic activity">
    <reaction evidence="4">
        <text>2 a Fe(II)-siderophore + NAD(+) + H(+) = 2 a Fe(III)-siderophore + NADH</text>
        <dbReference type="Rhea" id="RHEA:15061"/>
        <dbReference type="Rhea" id="RHEA-COMP:11342"/>
        <dbReference type="Rhea" id="RHEA-COMP:11344"/>
        <dbReference type="ChEBI" id="CHEBI:15378"/>
        <dbReference type="ChEBI" id="CHEBI:29033"/>
        <dbReference type="ChEBI" id="CHEBI:29034"/>
        <dbReference type="ChEBI" id="CHEBI:57540"/>
        <dbReference type="ChEBI" id="CHEBI:57945"/>
        <dbReference type="EC" id="1.16.1.7"/>
    </reaction>
    <physiologicalReaction direction="right-to-left" evidence="4">
        <dbReference type="Rhea" id="RHEA:15063"/>
    </physiologicalReaction>
</comment>
<comment type="cofactor">
    <cofactor evidence="4">
        <name>FAD</name>
        <dbReference type="ChEBI" id="CHEBI:57692"/>
    </cofactor>
</comment>
<comment type="biophysicochemical properties">
    <kinetics>
        <Vmax evidence="4">1.72 nmol/min/mg enzyme with Fe(3+)-vulnibactin as substrate (at pH 7.0 and 30 degrees Celsius)</Vmax>
        <Vmax evidence="4">1.73 nmol/min/mg enzyme with Fe(3+)-aerobactin as substrate (at pH 7.0 and 30 degrees Celsius)</Vmax>
        <Vmax evidence="4">0.97 nmol/min/mg enzyme with Fe(3+)-vibriobactin as substrate (at pH 7.0 and 30 degrees Celsius)</Vmax>
        <Vmax evidence="4">25.89 nmol/min/mg enzyme with Fe(3+)-nitrilotriacetic acid (NTA) as electron acceptor (at pH 7.0 and 30 degrees Celsius)</Vmax>
    </kinetics>
    <phDependence>
        <text evidence="4">Optimum pH is 7.0 with Fe(3+)-nitrilotriacetic acid (NTA) as electron acceptor.</text>
    </phDependence>
    <temperatureDependence>
        <text evidence="4">Optimum temperature is 37 degrees Celsius with Fe(3+)-nitrilotriacetic acid (NTA) as electron acceptor.</text>
    </temperatureDependence>
</comment>
<comment type="subunit">
    <text evidence="4">Monomer.</text>
</comment>
<comment type="subcellular location">
    <subcellularLocation>
        <location evidence="3">Cytoplasm</location>
    </subcellularLocation>
</comment>
<comment type="induction">
    <text evidence="2 4">Expression is up-regulated by low iron concentration condition. Expression is repressed by Fur under iron-repleted condition.</text>
</comment>
<comment type="disruption phenotype">
    <text evidence="2 3 4">Slightly impaired growth under low iron condition (PubMed:24135791, PubMed:28150143). Double deletion vuuB/iutB mutant secretes vulnibactin as wild-type, but has a significant growth impairment under low iron condition. Triple deletion vuuB/iutB/ics mutant supplemented with aerobactin has a significant growth impairment under low iron condition (PubMed:28150143). Double deletion vuub/ics mutant does not grow under low iron condition, but addition of vulnibactin restores the growth (PubMed:32681432).</text>
</comment>
<comment type="similarity">
    <text evidence="8">Belongs to the SIP oxidoreductase family.</text>
</comment>
<sequence>MSDSPERVYPMLLDFVRKETISKNLLRVTLTGEDLIGFPEDQNGSHIKVFFPNQASGILQLPVREGDNVIWPEHKPVPRAYSVRQYRAAVNELDIDFVTHGEETPGGGWALKADIGSQIGLIGPAGPDPLIEPADWHIIAGDLSAVPAISAILEKLPSDAKGYVFIEVDEIEDIHDLVHPEEMAINWLMRNPHDTEPALAKAIKQLPSPEKATSLSAFIAGENQSVINCRKILRNDYQIARDKLYAIPYWKRGKTEEAYHDERHDVMDAVY</sequence>
<protein>
    <recommendedName>
        <fullName evidence="6">Ferric vulnibactin reductase VuuB</fullName>
        <ecNumber evidence="4">1.16.1.7</ecNumber>
    </recommendedName>
    <alternativeName>
        <fullName evidence="7">Ferric chelate reductase</fullName>
        <shortName evidence="7">FCR</shortName>
    </alternativeName>
    <alternativeName>
        <fullName evidence="5 7">Ferric reductase</fullName>
    </alternativeName>
    <alternativeName>
        <fullName evidence="5 9">Ferric-vulnibactin utilization protein</fullName>
    </alternativeName>
    <alternativeName>
        <fullName evidence="7">Vulnibactin utilization protein B</fullName>
    </alternativeName>
</protein>
<gene>
    <name evidence="5 6 7 9" type="primary">vuuB</name>
</gene>
<keyword id="KW-0963">Cytoplasm</keyword>
<keyword id="KW-0274">FAD</keyword>
<keyword id="KW-0285">Flavoprotein</keyword>
<keyword id="KW-0520">NAD</keyword>
<keyword id="KW-0560">Oxidoreductase</keyword>
<feature type="chain" id="PRO_0000458467" description="Ferric vulnibactin reductase VuuB">
    <location>
        <begin position="1"/>
        <end position="271"/>
    </location>
</feature>
<feature type="domain" description="FAD-binding FR-type" evidence="1">
    <location>
        <begin position="8"/>
        <end position="131"/>
    </location>
</feature>
<evidence type="ECO:0000255" key="1">
    <source>
        <dbReference type="PROSITE-ProRule" id="PRU00716"/>
    </source>
</evidence>
<evidence type="ECO:0000269" key="2">
    <source>
    </source>
</evidence>
<evidence type="ECO:0000269" key="3">
    <source>
    </source>
</evidence>
<evidence type="ECO:0000269" key="4">
    <source>
    </source>
</evidence>
<evidence type="ECO:0000303" key="5">
    <source>
    </source>
</evidence>
<evidence type="ECO:0000303" key="6">
    <source>
    </source>
</evidence>
<evidence type="ECO:0000303" key="7">
    <source>
    </source>
</evidence>
<evidence type="ECO:0000305" key="8"/>
<evidence type="ECO:0000312" key="9">
    <source>
        <dbReference type="EMBL" id="BAO05510.1"/>
    </source>
</evidence>
<name>VUUB_VIBVL</name>
<proteinExistence type="evidence at protein level"/>
<accession>V5XKC3</accession>
<organism evidence="9">
    <name type="scientific">Vibrio vulnificus</name>
    <dbReference type="NCBI Taxonomy" id="672"/>
    <lineage>
        <taxon>Bacteria</taxon>
        <taxon>Pseudomonadati</taxon>
        <taxon>Pseudomonadota</taxon>
        <taxon>Gammaproteobacteria</taxon>
        <taxon>Vibrionales</taxon>
        <taxon>Vibrionaceae</taxon>
        <taxon>Vibrio</taxon>
    </lineage>
</organism>
<dbReference type="EC" id="1.16.1.7" evidence="4"/>
<dbReference type="EMBL" id="AB822515">
    <property type="protein sequence ID" value="BAO05510.1"/>
    <property type="molecule type" value="Genomic_DNA"/>
</dbReference>
<dbReference type="SMR" id="V5XKC3"/>
<dbReference type="GO" id="GO:0005737">
    <property type="term" value="C:cytoplasm"/>
    <property type="evidence" value="ECO:0000314"/>
    <property type="project" value="UniProtKB"/>
</dbReference>
<dbReference type="GO" id="GO:0140618">
    <property type="term" value="F:ferric-chelate reductase (NADH) activity"/>
    <property type="evidence" value="ECO:0000314"/>
    <property type="project" value="UniProtKB"/>
</dbReference>
<dbReference type="GO" id="GO:0010106">
    <property type="term" value="P:cellular response to iron ion starvation"/>
    <property type="evidence" value="ECO:0000270"/>
    <property type="project" value="UniProtKB"/>
</dbReference>
<dbReference type="CDD" id="cd06193">
    <property type="entry name" value="siderophore_interacting"/>
    <property type="match status" value="1"/>
</dbReference>
<dbReference type="FunFam" id="3.40.50.80:FF:000038">
    <property type="entry name" value="Vibriobactin utilization protein ViuB"/>
    <property type="match status" value="1"/>
</dbReference>
<dbReference type="Gene3D" id="3.40.50.80">
    <property type="entry name" value="Nucleotide-binding domain of ferredoxin-NADP reductase (FNR) module"/>
    <property type="match status" value="1"/>
</dbReference>
<dbReference type="Gene3D" id="2.40.30.10">
    <property type="entry name" value="Translation factors"/>
    <property type="match status" value="1"/>
</dbReference>
<dbReference type="InterPro" id="IPR013113">
    <property type="entry name" value="FAD-bd_9_SIP"/>
</dbReference>
<dbReference type="InterPro" id="IPR017927">
    <property type="entry name" value="FAD-bd_FR_type"/>
</dbReference>
<dbReference type="InterPro" id="IPR039261">
    <property type="entry name" value="FNR_nucleotide-bd"/>
</dbReference>
<dbReference type="InterPro" id="IPR017938">
    <property type="entry name" value="Riboflavin_synthase-like_b-brl"/>
</dbReference>
<dbReference type="InterPro" id="IPR007037">
    <property type="entry name" value="SIP_C"/>
</dbReference>
<dbReference type="InterPro" id="IPR039374">
    <property type="entry name" value="SIP_fam"/>
</dbReference>
<dbReference type="PANTHER" id="PTHR30157">
    <property type="entry name" value="FERRIC REDUCTASE, NADPH-DEPENDENT"/>
    <property type="match status" value="1"/>
</dbReference>
<dbReference type="PANTHER" id="PTHR30157:SF0">
    <property type="entry name" value="NADPH-DEPENDENT FERRIC-CHELATE REDUCTASE"/>
    <property type="match status" value="1"/>
</dbReference>
<dbReference type="Pfam" id="PF08021">
    <property type="entry name" value="FAD_binding_9"/>
    <property type="match status" value="1"/>
</dbReference>
<dbReference type="Pfam" id="PF04954">
    <property type="entry name" value="SIP"/>
    <property type="match status" value="1"/>
</dbReference>
<dbReference type="SUPFAM" id="SSF63380">
    <property type="entry name" value="Riboflavin synthase domain-like"/>
    <property type="match status" value="1"/>
</dbReference>
<dbReference type="PROSITE" id="PS51384">
    <property type="entry name" value="FAD_FR"/>
    <property type="match status" value="1"/>
</dbReference>
<reference evidence="9" key="1">
    <citation type="journal article" date="2013" name="Microb. Pathog.">
        <title>Role of periplasmic binding proteins, FatB and VatD, in the vulnibactin utilization system of Vibrio vulnificus M2799.</title>
        <authorList>
            <person name="Kawano H."/>
            <person name="Miyamoto K."/>
            <person name="Sakaguchi I."/>
            <person name="Myojin T."/>
            <person name="Moriwaki M."/>
            <person name="Tsuchiya T."/>
            <person name="Tanabe T."/>
            <person name="Yamamoto S."/>
            <person name="Tsujibo H."/>
        </authorList>
    </citation>
    <scope>NUCLEOTIDE SEQUENCE [GENOMIC DNA]</scope>
    <scope>INDUCTION</scope>
    <scope>DISRUPTION PHENOTYPE</scope>
    <source>
        <strain evidence="5 9">M2799</strain>
    </source>
</reference>
<reference key="2">
    <citation type="journal article" date="2017" name="BioMetals">
        <title>IutB participates in the ferric-vulnibactin utilization system in Vibrio vulnificus M2799.</title>
        <authorList>
            <person name="Kawano H."/>
            <person name="Miyamoto K."/>
            <person name="Negoro M."/>
            <person name="Zushi E."/>
            <person name="Tsuchiya T."/>
            <person name="Tanabe T."/>
            <person name="Funahashi T."/>
            <person name="Tsujibo H."/>
        </authorList>
    </citation>
    <scope>FUNCTION</scope>
    <scope>SUBCELLULAR LOCATION</scope>
    <scope>DISRUPTION PHENOTYPE</scope>
    <source>
        <strain evidence="6">M2799</strain>
    </source>
</reference>
<reference key="3">
    <citation type="journal article" date="2020" name="BioMetals">
        <title>VuuB and IutB reduce ferric-vulnibactin in Vibrio vulnificus M2799.</title>
        <authorList>
            <person name="Okai N."/>
            <person name="Miyamoto K."/>
            <person name="Tomoo K."/>
            <person name="Tsuchiya T."/>
            <person name="Komano J."/>
            <person name="Tanabe T."/>
            <person name="Funahashi T."/>
            <person name="Tsujibo H."/>
        </authorList>
    </citation>
    <scope>FUNCTION</scope>
    <scope>CATALYTIC ACTIVITY</scope>
    <scope>SUBSTRATE SPECIFICITY</scope>
    <scope>COFACTOR</scope>
    <scope>BIOPHYSICOCHEMICAL PROPERTIES</scope>
    <scope>SUBUNIT</scope>
    <scope>INDUCTION</scope>
    <scope>DISRUPTION PHENOTYPE</scope>
    <source>
        <strain evidence="7">M2799</strain>
    </source>
</reference>